<organismHost>
    <name type="scientific">Aves</name>
    <dbReference type="NCBI Taxonomy" id="8782"/>
</organismHost>
<organismHost>
    <name type="scientific">Cetacea</name>
    <name type="common">whales</name>
    <dbReference type="NCBI Taxonomy" id="9721"/>
</organismHost>
<organismHost>
    <name type="scientific">Homo sapiens</name>
    <name type="common">Human</name>
    <dbReference type="NCBI Taxonomy" id="9606"/>
</organismHost>
<organismHost>
    <name type="scientific">Phocidae</name>
    <name type="common">true seals</name>
    <dbReference type="NCBI Taxonomy" id="9709"/>
</organismHost>
<organismHost>
    <name type="scientific">Sus scrofa</name>
    <name type="common">Pig</name>
    <dbReference type="NCBI Taxonomy" id="9823"/>
</organismHost>
<comment type="function">
    <text evidence="1">Encapsidates the negative strand viral RNA, protecting it from nucleases. The encapsidated genomic RNA is termed the ribonucleoprotein (RNP) and serves as template for transcription and replication. The RNP needs to be localized in the host nucleus to start an infectious cycle, but is too large to diffuse through the nuclear pore complex. NP comprises at least 2 nuclear localization signals that are responsible for the active RNP import into the nucleus through cellular importin alpha/beta pathway. Later in the infection, nclear export of RNPs are mediated through viral proteins NEP interacting with M1 which binds nucleoproteins. It is possible that nucleoprotein binds directly host exportin-1/XPO1 and plays an active role in RNPs nuclear export. M1 interaction with RNP seems to hide nucleoprotein's nuclear localization signals. Soon after a virion infects a new cell, M1 dissociates from the RNP under acidification of the virion driven by M2 protein. Dissociation of M1 from RNP unmasks nucleoprotein's nuclear localization signals, targeting the RNP to the nucleus.</text>
</comment>
<comment type="subunit">
    <text evidence="1">Homomultimerizes to form the nucleocapsid. May bind host exportin-1/XPO1. Binds to viral genomic RNA. Protein-RNA contacts are mediated by a combination of electrostatic interactions between positively charged residues and the phosphate backbone and planar interactions between aromatic side chains and bases.</text>
</comment>
<comment type="subcellular location">
    <subcellularLocation>
        <location evidence="1">Virion</location>
    </subcellularLocation>
    <subcellularLocation>
        <location evidence="1">Host nucleus</location>
    </subcellularLocation>
</comment>
<comment type="PTM">
    <text evidence="1">Late in virus-infected cells, may be cleaved from a 56-kDa protein to a 53-kDa protein by a cellular caspase. This cleavage might be a marker for the onset of apoptosis in infected cells or have a specific function in virus host interaction.</text>
</comment>
<comment type="similarity">
    <text evidence="1">Belongs to the influenza viruses nucleoprotein family.</text>
</comment>
<reference key="1">
    <citation type="journal article" date="2000" name="Virus Res.">
        <title>Genetic characterization of H3N2 influenza viruses isolated from pigs in North America, 1977-1999: evidence for wholly human and reassortant virus genotypes.</title>
        <authorList>
            <person name="Karasin A.I."/>
            <person name="Schutten M.M."/>
            <person name="Cooper L.A."/>
            <person name="Smith C.B."/>
            <person name="Subbarao K."/>
            <person name="Anderson G.A."/>
            <person name="Carman S."/>
            <person name="Olsen C.W."/>
        </authorList>
    </citation>
    <scope>NUCLEOTIDE SEQUENCE [GENOMIC RNA]</scope>
</reference>
<reference key="2">
    <citation type="submission" date="2006-03" db="EMBL/GenBank/DDBJ databases">
        <title>The NIAID influenza genome sequencing project.</title>
        <authorList>
            <person name="Ghedin E."/>
            <person name="Spiro D."/>
            <person name="Miller N."/>
            <person name="Zaborsky J."/>
            <person name="Feldblyum T."/>
            <person name="Subbu V."/>
            <person name="Shumway M."/>
            <person name="Sparenborg J."/>
            <person name="Groveman L."/>
            <person name="Halpin R."/>
            <person name="Sitz J."/>
            <person name="Koo H."/>
            <person name="Salzberg S.L."/>
            <person name="Webster R.G."/>
            <person name="Hoffmann E."/>
            <person name="Krauss S."/>
            <person name="Naeve C."/>
            <person name="Bao Y."/>
            <person name="Bolotov P."/>
            <person name="Dernovoy D."/>
            <person name="Kiryutin B."/>
            <person name="Lipman D.J."/>
            <person name="Tatusova T."/>
        </authorList>
    </citation>
    <scope>NUCLEOTIDE SEQUENCE [GENOMIC RNA]</scope>
</reference>
<gene>
    <name evidence="1" type="primary">NP</name>
</gene>
<proteinExistence type="inferred from homology"/>
<accession>Q9E5Y8</accession>
<accession>Q288Z2</accession>
<evidence type="ECO:0000255" key="1">
    <source>
        <dbReference type="HAMAP-Rule" id="MF_04070"/>
    </source>
</evidence>
<evidence type="ECO:0000256" key="2">
    <source>
        <dbReference type="SAM" id="MobiDB-lite"/>
    </source>
</evidence>
<organism>
    <name type="scientific">Influenza A virus (strain A/Swine/Colorado/1/1977 H3N2)</name>
    <dbReference type="NCBI Taxonomy" id="385645"/>
    <lineage>
        <taxon>Viruses</taxon>
        <taxon>Riboviria</taxon>
        <taxon>Orthornavirae</taxon>
        <taxon>Negarnaviricota</taxon>
        <taxon>Polyploviricotina</taxon>
        <taxon>Insthoviricetes</taxon>
        <taxon>Articulavirales</taxon>
        <taxon>Orthomyxoviridae</taxon>
        <taxon>Alphainfluenzavirus</taxon>
        <taxon>Alphainfluenzavirus influenzae</taxon>
        <taxon>Influenza A virus</taxon>
    </lineage>
</organism>
<protein>
    <recommendedName>
        <fullName evidence="1">Nucleoprotein</fullName>
    </recommendedName>
    <alternativeName>
        <fullName evidence="1">Nucleocapsid protein</fullName>
        <shortName evidence="1">Protein N</shortName>
    </alternativeName>
</protein>
<dbReference type="EMBL" id="AF251392">
    <property type="protein sequence ID" value="AAG01746.1"/>
    <property type="molecule type" value="Genomic_RNA"/>
</dbReference>
<dbReference type="EMBL" id="CY009303">
    <property type="protein sequence ID" value="ABD61555.1"/>
    <property type="molecule type" value="Genomic_RNA"/>
</dbReference>
<dbReference type="SMR" id="Q9E5Y8"/>
<dbReference type="PRO" id="PR:Q9E5Y8"/>
<dbReference type="Proteomes" id="UP000009193">
    <property type="component" value="Genome"/>
</dbReference>
<dbReference type="GO" id="GO:0019029">
    <property type="term" value="C:helical viral capsid"/>
    <property type="evidence" value="ECO:0007669"/>
    <property type="project" value="UniProtKB-UniRule"/>
</dbReference>
<dbReference type="GO" id="GO:0043657">
    <property type="term" value="C:host cell"/>
    <property type="evidence" value="ECO:0007669"/>
    <property type="project" value="GOC"/>
</dbReference>
<dbReference type="GO" id="GO:0042025">
    <property type="term" value="C:host cell nucleus"/>
    <property type="evidence" value="ECO:0007669"/>
    <property type="project" value="UniProtKB-SubCell"/>
</dbReference>
<dbReference type="GO" id="GO:1990904">
    <property type="term" value="C:ribonucleoprotein complex"/>
    <property type="evidence" value="ECO:0007669"/>
    <property type="project" value="UniProtKB-KW"/>
</dbReference>
<dbReference type="GO" id="GO:0019013">
    <property type="term" value="C:viral nucleocapsid"/>
    <property type="evidence" value="ECO:0007669"/>
    <property type="project" value="UniProtKB-UniRule"/>
</dbReference>
<dbReference type="GO" id="GO:0003723">
    <property type="term" value="F:RNA binding"/>
    <property type="evidence" value="ECO:0007669"/>
    <property type="project" value="UniProtKB-UniRule"/>
</dbReference>
<dbReference type="GO" id="GO:0005198">
    <property type="term" value="F:structural molecule activity"/>
    <property type="evidence" value="ECO:0007669"/>
    <property type="project" value="UniProtKB-UniRule"/>
</dbReference>
<dbReference type="GO" id="GO:0046718">
    <property type="term" value="P:symbiont entry into host cell"/>
    <property type="evidence" value="ECO:0007669"/>
    <property type="project" value="UniProtKB-KW"/>
</dbReference>
<dbReference type="GO" id="GO:0075732">
    <property type="term" value="P:viral penetration into host nucleus"/>
    <property type="evidence" value="ECO:0007669"/>
    <property type="project" value="UniProtKB-UniRule"/>
</dbReference>
<dbReference type="HAMAP" id="MF_04070">
    <property type="entry name" value="INFV_NCAP"/>
    <property type="match status" value="1"/>
</dbReference>
<dbReference type="InterPro" id="IPR002141">
    <property type="entry name" value="Flu_NP"/>
</dbReference>
<dbReference type="Pfam" id="PF00506">
    <property type="entry name" value="Flu_NP"/>
    <property type="match status" value="1"/>
</dbReference>
<dbReference type="SUPFAM" id="SSF161003">
    <property type="entry name" value="flu NP-like"/>
    <property type="match status" value="1"/>
</dbReference>
<keyword id="KW-0167">Capsid protein</keyword>
<keyword id="KW-1139">Helical capsid protein</keyword>
<keyword id="KW-1048">Host nucleus</keyword>
<keyword id="KW-0945">Host-virus interaction</keyword>
<keyword id="KW-0687">Ribonucleoprotein</keyword>
<keyword id="KW-0694">RNA-binding</keyword>
<keyword id="KW-0543">Viral nucleoprotein</keyword>
<keyword id="KW-1163">Viral penetration into host nucleus</keyword>
<keyword id="KW-0946">Virion</keyword>
<keyword id="KW-1160">Virus entry into host cell</keyword>
<sequence length="498" mass="56241">MASQGTKRSYEQMETDGERQNATEIRASVGRMIDGIGRFYIQMCTELKLSDYEGRLIQNSLTIERMVLSAFDERRNRYLEEHPSAGKDPKKTGGPIYKRVDGKWMRELVLYDKEEIRRIWRQANNGDDATRGLTHMMIWHSNLNDTTYQRTRALVRTGMDPRMCSLMQGSTLPRRSGAAGAAVKGVGTMVMELIRMIKRGINDRNFWRGENGRKTRSAYERMCNILKGKFQTAAQRAMMDQVRESRNPGNAEIEDLIFSARSALILRGSVAHKSCLPACVYGPAVASGYNFEKEGYSLVGIDPFKLLQNSQVYSLIRPNENPAHKSQLVWMACHSAAFEDLRLLSFIRGTKVSPRGKLSTRGVQIASNENMDTMESSTLELRSRYWAIRTRSGGNTNQQRASAGQISVQPAFSVQRNLPFDKSTIMAAFTGNTEGRTSDMRAEIIRMMEGAKPEEMSFRGRGVFELSDEKATNPVVPSFDMSNEGSYFFGDNAEEYDN</sequence>
<feature type="chain" id="PRO_0000402428" description="Nucleoprotein">
    <location>
        <begin position="1"/>
        <end position="498"/>
    </location>
</feature>
<feature type="region of interest" description="Disordered" evidence="2">
    <location>
        <begin position="1"/>
        <end position="21"/>
    </location>
</feature>
<feature type="short sequence motif" description="Unconventional nuclear localization signal" evidence="1">
    <location>
        <begin position="1"/>
        <end position="18"/>
    </location>
</feature>
<feature type="short sequence motif" description="Bipartite nuclear localization signal" evidence="1">
    <location>
        <begin position="198"/>
        <end position="216"/>
    </location>
</feature>
<feature type="compositionally biased region" description="Basic and acidic residues" evidence="2">
    <location>
        <begin position="8"/>
        <end position="21"/>
    </location>
</feature>
<feature type="sequence conflict" description="In Ref. 2; ABD61555." ref="2">
    <original>R</original>
    <variation>A</variation>
    <location>
        <position position="131"/>
    </location>
</feature>
<feature type="sequence conflict" description="In Ref. 2; ABD61555." ref="2">
    <original>N</original>
    <variation>D</variation>
    <location>
        <position position="290"/>
    </location>
</feature>
<name>NCAP_I77A4</name>